<dbReference type="EC" id="7.6.2.14" evidence="1"/>
<dbReference type="EMBL" id="CP000001">
    <property type="protein sequence ID" value="AAU17619.1"/>
    <property type="molecule type" value="Genomic_DNA"/>
</dbReference>
<dbReference type="RefSeq" id="WP_000218624.1">
    <property type="nucleotide sequence ID" value="NC_006274.1"/>
</dbReference>
<dbReference type="SMR" id="Q63A38"/>
<dbReference type="KEGG" id="bcz:BCE33L2642"/>
<dbReference type="PATRIC" id="fig|288681.22.peg.2821"/>
<dbReference type="Proteomes" id="UP000002612">
    <property type="component" value="Chromosome"/>
</dbReference>
<dbReference type="GO" id="GO:0005886">
    <property type="term" value="C:plasma membrane"/>
    <property type="evidence" value="ECO:0007669"/>
    <property type="project" value="UniProtKB-SubCell"/>
</dbReference>
<dbReference type="GO" id="GO:0005524">
    <property type="term" value="F:ATP binding"/>
    <property type="evidence" value="ECO:0007669"/>
    <property type="project" value="UniProtKB-KW"/>
</dbReference>
<dbReference type="GO" id="GO:0016887">
    <property type="term" value="F:ATP hydrolysis activity"/>
    <property type="evidence" value="ECO:0007669"/>
    <property type="project" value="InterPro"/>
</dbReference>
<dbReference type="CDD" id="cd03293">
    <property type="entry name" value="ABC_NrtD_SsuB_transporters"/>
    <property type="match status" value="1"/>
</dbReference>
<dbReference type="FunFam" id="3.40.50.300:FF:001273">
    <property type="entry name" value="Aliphatic sulfonates import ATP-binding protein SsuB"/>
    <property type="match status" value="1"/>
</dbReference>
<dbReference type="Gene3D" id="3.40.50.300">
    <property type="entry name" value="P-loop containing nucleotide triphosphate hydrolases"/>
    <property type="match status" value="1"/>
</dbReference>
<dbReference type="InterPro" id="IPR003593">
    <property type="entry name" value="AAA+_ATPase"/>
</dbReference>
<dbReference type="InterPro" id="IPR003439">
    <property type="entry name" value="ABC_transporter-like_ATP-bd"/>
</dbReference>
<dbReference type="InterPro" id="IPR017871">
    <property type="entry name" value="ABC_transporter-like_CS"/>
</dbReference>
<dbReference type="InterPro" id="IPR050166">
    <property type="entry name" value="ABC_transporter_ATP-bind"/>
</dbReference>
<dbReference type="InterPro" id="IPR027417">
    <property type="entry name" value="P-loop_NTPase"/>
</dbReference>
<dbReference type="PANTHER" id="PTHR42788:SF13">
    <property type="entry name" value="ALIPHATIC SULFONATES IMPORT ATP-BINDING PROTEIN SSUB"/>
    <property type="match status" value="1"/>
</dbReference>
<dbReference type="PANTHER" id="PTHR42788">
    <property type="entry name" value="TAURINE IMPORT ATP-BINDING PROTEIN-RELATED"/>
    <property type="match status" value="1"/>
</dbReference>
<dbReference type="Pfam" id="PF00005">
    <property type="entry name" value="ABC_tran"/>
    <property type="match status" value="1"/>
</dbReference>
<dbReference type="SMART" id="SM00382">
    <property type="entry name" value="AAA"/>
    <property type="match status" value="1"/>
</dbReference>
<dbReference type="SUPFAM" id="SSF52540">
    <property type="entry name" value="P-loop containing nucleoside triphosphate hydrolases"/>
    <property type="match status" value="1"/>
</dbReference>
<dbReference type="PROSITE" id="PS00211">
    <property type="entry name" value="ABC_TRANSPORTER_1"/>
    <property type="match status" value="1"/>
</dbReference>
<dbReference type="PROSITE" id="PS50893">
    <property type="entry name" value="ABC_TRANSPORTER_2"/>
    <property type="match status" value="1"/>
</dbReference>
<dbReference type="PROSITE" id="PS51291">
    <property type="entry name" value="SSUB"/>
    <property type="match status" value="1"/>
</dbReference>
<evidence type="ECO:0000255" key="1">
    <source>
        <dbReference type="HAMAP-Rule" id="MF_01724"/>
    </source>
</evidence>
<reference key="1">
    <citation type="journal article" date="2006" name="J. Bacteriol.">
        <title>Pathogenomic sequence analysis of Bacillus cereus and Bacillus thuringiensis isolates closely related to Bacillus anthracis.</title>
        <authorList>
            <person name="Han C.S."/>
            <person name="Xie G."/>
            <person name="Challacombe J.F."/>
            <person name="Altherr M.R."/>
            <person name="Bhotika S.S."/>
            <person name="Bruce D."/>
            <person name="Campbell C.S."/>
            <person name="Campbell M.L."/>
            <person name="Chen J."/>
            <person name="Chertkov O."/>
            <person name="Cleland C."/>
            <person name="Dimitrijevic M."/>
            <person name="Doggett N.A."/>
            <person name="Fawcett J.J."/>
            <person name="Glavina T."/>
            <person name="Goodwin L.A."/>
            <person name="Hill K.K."/>
            <person name="Hitchcock P."/>
            <person name="Jackson P.J."/>
            <person name="Keim P."/>
            <person name="Kewalramani A.R."/>
            <person name="Longmire J."/>
            <person name="Lucas S."/>
            <person name="Malfatti S."/>
            <person name="McMurry K."/>
            <person name="Meincke L.J."/>
            <person name="Misra M."/>
            <person name="Moseman B.L."/>
            <person name="Mundt M."/>
            <person name="Munk A.C."/>
            <person name="Okinaka R.T."/>
            <person name="Parson-Quintana B."/>
            <person name="Reilly L.P."/>
            <person name="Richardson P."/>
            <person name="Robinson D.L."/>
            <person name="Rubin E."/>
            <person name="Saunders E."/>
            <person name="Tapia R."/>
            <person name="Tesmer J.G."/>
            <person name="Thayer N."/>
            <person name="Thompson L.S."/>
            <person name="Tice H."/>
            <person name="Ticknor L.O."/>
            <person name="Wills P.L."/>
            <person name="Brettin T.S."/>
            <person name="Gilna P."/>
        </authorList>
    </citation>
    <scope>NUCLEOTIDE SEQUENCE [LARGE SCALE GENOMIC DNA]</scope>
    <source>
        <strain>ZK / E33L</strain>
    </source>
</reference>
<gene>
    <name evidence="1" type="primary">ssuB</name>
    <name type="ordered locus">BCE33L2642</name>
</gene>
<protein>
    <recommendedName>
        <fullName evidence="1">Aliphatic sulfonates import ATP-binding protein SsuB</fullName>
        <ecNumber evidence="1">7.6.2.14</ecNumber>
    </recommendedName>
</protein>
<accession>Q63A38</accession>
<keyword id="KW-0067">ATP-binding</keyword>
<keyword id="KW-1003">Cell membrane</keyword>
<keyword id="KW-0472">Membrane</keyword>
<keyword id="KW-0547">Nucleotide-binding</keyword>
<keyword id="KW-1278">Translocase</keyword>
<keyword id="KW-0813">Transport</keyword>
<organism>
    <name type="scientific">Bacillus cereus (strain ZK / E33L)</name>
    <dbReference type="NCBI Taxonomy" id="288681"/>
    <lineage>
        <taxon>Bacteria</taxon>
        <taxon>Bacillati</taxon>
        <taxon>Bacillota</taxon>
        <taxon>Bacilli</taxon>
        <taxon>Bacillales</taxon>
        <taxon>Bacillaceae</taxon>
        <taxon>Bacillus</taxon>
        <taxon>Bacillus cereus group</taxon>
    </lineage>
</organism>
<sequence>MTVSINEVSKYFSKQTGTVQVLENINFQLEKGDFVTVIGPSGCGKSTLLKIIAGLDNDFEGEIIIDGERITKPSKKQGFIFQEHRLFPWLTVEENIAADLSLKDKYVKDKVKEWVEIVRLDGFEKSYPKEISGGMSQRVAIARALLRDPNVLLLDEPFGALDAFTRSHLQEVLLNIWEQKKTTMIFVTHDIDEAIYLSNRIVIMSAKPGKIHKVIENKLPYPRSKNSESFQEIRKKVLQQFEYGGLIQTSL</sequence>
<comment type="function">
    <text evidence="1">Part of the ABC transporter complex SsuABC involved in aliphatic sulfonates import. Responsible for energy coupling to the transport system.</text>
</comment>
<comment type="catalytic activity">
    <reaction evidence="1">
        <text>ATP + H2O + aliphatic sulfonate-[sulfonate-binding protein]Side 1 = ADP + phosphate + aliphatic sulfonateSide 2 + [sulfonate-binding protein]Side 1.</text>
        <dbReference type="EC" id="7.6.2.14"/>
    </reaction>
</comment>
<comment type="subunit">
    <text evidence="1">The complex is composed of two ATP-binding proteins (SsuB), two transmembrane proteins (SsuC) and a solute-binding protein (SsuA).</text>
</comment>
<comment type="subcellular location">
    <subcellularLocation>
        <location evidence="1">Cell membrane</location>
        <topology evidence="1">Peripheral membrane protein</topology>
    </subcellularLocation>
</comment>
<comment type="similarity">
    <text evidence="1">Belongs to the ABC transporter superfamily. Aliphatic sulfonates importer (TC 3.A.1.17.2) family.</text>
</comment>
<proteinExistence type="inferred from homology"/>
<name>SSUB_BACCZ</name>
<feature type="chain" id="PRO_0000279887" description="Aliphatic sulfonates import ATP-binding protein SsuB">
    <location>
        <begin position="1"/>
        <end position="251"/>
    </location>
</feature>
<feature type="domain" description="ABC transporter" evidence="1">
    <location>
        <begin position="3"/>
        <end position="231"/>
    </location>
</feature>
<feature type="binding site" evidence="1">
    <location>
        <begin position="39"/>
        <end position="46"/>
    </location>
    <ligand>
        <name>ATP</name>
        <dbReference type="ChEBI" id="CHEBI:30616"/>
    </ligand>
</feature>